<dbReference type="EC" id="3.6.1.27" evidence="1"/>
<dbReference type="EMBL" id="CP001068">
    <property type="protein sequence ID" value="ACD25802.1"/>
    <property type="molecule type" value="Genomic_DNA"/>
</dbReference>
<dbReference type="SMR" id="B2U7E0"/>
<dbReference type="STRING" id="402626.Rpic_0651"/>
<dbReference type="KEGG" id="rpi:Rpic_0651"/>
<dbReference type="PATRIC" id="fig|402626.5.peg.1852"/>
<dbReference type="eggNOG" id="COG1968">
    <property type="taxonomic scope" value="Bacteria"/>
</dbReference>
<dbReference type="HOGENOM" id="CLU_060296_2_0_4"/>
<dbReference type="GO" id="GO:0005886">
    <property type="term" value="C:plasma membrane"/>
    <property type="evidence" value="ECO:0007669"/>
    <property type="project" value="UniProtKB-SubCell"/>
</dbReference>
<dbReference type="GO" id="GO:0050380">
    <property type="term" value="F:undecaprenyl-diphosphatase activity"/>
    <property type="evidence" value="ECO:0007669"/>
    <property type="project" value="UniProtKB-UniRule"/>
</dbReference>
<dbReference type="GO" id="GO:0071555">
    <property type="term" value="P:cell wall organization"/>
    <property type="evidence" value="ECO:0007669"/>
    <property type="project" value="UniProtKB-KW"/>
</dbReference>
<dbReference type="GO" id="GO:0009252">
    <property type="term" value="P:peptidoglycan biosynthetic process"/>
    <property type="evidence" value="ECO:0007669"/>
    <property type="project" value="UniProtKB-KW"/>
</dbReference>
<dbReference type="GO" id="GO:0008360">
    <property type="term" value="P:regulation of cell shape"/>
    <property type="evidence" value="ECO:0007669"/>
    <property type="project" value="UniProtKB-KW"/>
</dbReference>
<dbReference type="GO" id="GO:0046677">
    <property type="term" value="P:response to antibiotic"/>
    <property type="evidence" value="ECO:0007669"/>
    <property type="project" value="UniProtKB-UniRule"/>
</dbReference>
<dbReference type="HAMAP" id="MF_01006">
    <property type="entry name" value="Undec_diphosphatase"/>
    <property type="match status" value="1"/>
</dbReference>
<dbReference type="InterPro" id="IPR003824">
    <property type="entry name" value="UppP"/>
</dbReference>
<dbReference type="NCBIfam" id="NF001389">
    <property type="entry name" value="PRK00281.1-2"/>
    <property type="match status" value="1"/>
</dbReference>
<dbReference type="NCBIfam" id="NF001390">
    <property type="entry name" value="PRK00281.1-4"/>
    <property type="match status" value="1"/>
</dbReference>
<dbReference type="NCBIfam" id="TIGR00753">
    <property type="entry name" value="undec_PP_bacA"/>
    <property type="match status" value="1"/>
</dbReference>
<dbReference type="PANTHER" id="PTHR30622">
    <property type="entry name" value="UNDECAPRENYL-DIPHOSPHATASE"/>
    <property type="match status" value="1"/>
</dbReference>
<dbReference type="PANTHER" id="PTHR30622:SF3">
    <property type="entry name" value="UNDECAPRENYL-DIPHOSPHATASE"/>
    <property type="match status" value="1"/>
</dbReference>
<dbReference type="Pfam" id="PF02673">
    <property type="entry name" value="BacA"/>
    <property type="match status" value="1"/>
</dbReference>
<organism>
    <name type="scientific">Ralstonia pickettii (strain 12J)</name>
    <dbReference type="NCBI Taxonomy" id="402626"/>
    <lineage>
        <taxon>Bacteria</taxon>
        <taxon>Pseudomonadati</taxon>
        <taxon>Pseudomonadota</taxon>
        <taxon>Betaproteobacteria</taxon>
        <taxon>Burkholderiales</taxon>
        <taxon>Burkholderiaceae</taxon>
        <taxon>Ralstonia</taxon>
    </lineage>
</organism>
<evidence type="ECO:0000255" key="1">
    <source>
        <dbReference type="HAMAP-Rule" id="MF_01006"/>
    </source>
</evidence>
<proteinExistence type="inferred from homology"/>
<feature type="chain" id="PRO_1000197393" description="Undecaprenyl-diphosphatase">
    <location>
        <begin position="1"/>
        <end position="293"/>
    </location>
</feature>
<feature type="transmembrane region" description="Helical" evidence="1">
    <location>
        <begin position="3"/>
        <end position="23"/>
    </location>
</feature>
<feature type="transmembrane region" description="Helical" evidence="1">
    <location>
        <begin position="43"/>
        <end position="63"/>
    </location>
</feature>
<feature type="transmembrane region" description="Helical" evidence="1">
    <location>
        <begin position="85"/>
        <end position="105"/>
    </location>
</feature>
<feature type="transmembrane region" description="Helical" evidence="1">
    <location>
        <begin position="109"/>
        <end position="129"/>
    </location>
</feature>
<feature type="transmembrane region" description="Helical" evidence="1">
    <location>
        <begin position="203"/>
        <end position="223"/>
    </location>
</feature>
<feature type="transmembrane region" description="Helical" evidence="1">
    <location>
        <begin position="238"/>
        <end position="258"/>
    </location>
</feature>
<feature type="transmembrane region" description="Helical" evidence="1">
    <location>
        <begin position="269"/>
        <end position="289"/>
    </location>
</feature>
<keyword id="KW-0046">Antibiotic resistance</keyword>
<keyword id="KW-0997">Cell inner membrane</keyword>
<keyword id="KW-1003">Cell membrane</keyword>
<keyword id="KW-0133">Cell shape</keyword>
<keyword id="KW-0961">Cell wall biogenesis/degradation</keyword>
<keyword id="KW-0378">Hydrolase</keyword>
<keyword id="KW-0472">Membrane</keyword>
<keyword id="KW-0573">Peptidoglycan synthesis</keyword>
<keyword id="KW-0812">Transmembrane</keyword>
<keyword id="KW-1133">Transmembrane helix</keyword>
<comment type="function">
    <text evidence="1">Catalyzes the dephosphorylation of undecaprenyl diphosphate (UPP). Confers resistance to bacitracin.</text>
</comment>
<comment type="catalytic activity">
    <reaction evidence="1">
        <text>di-trans,octa-cis-undecaprenyl diphosphate + H2O = di-trans,octa-cis-undecaprenyl phosphate + phosphate + H(+)</text>
        <dbReference type="Rhea" id="RHEA:28094"/>
        <dbReference type="ChEBI" id="CHEBI:15377"/>
        <dbReference type="ChEBI" id="CHEBI:15378"/>
        <dbReference type="ChEBI" id="CHEBI:43474"/>
        <dbReference type="ChEBI" id="CHEBI:58405"/>
        <dbReference type="ChEBI" id="CHEBI:60392"/>
        <dbReference type="EC" id="3.6.1.27"/>
    </reaction>
</comment>
<comment type="subcellular location">
    <subcellularLocation>
        <location evidence="1">Cell inner membrane</location>
        <topology evidence="1">Multi-pass membrane protein</topology>
    </subcellularLocation>
</comment>
<comment type="miscellaneous">
    <text>Bacitracin is thought to be involved in the inhibition of peptidoglycan synthesis by sequestering undecaprenyl diphosphate, thereby reducing the pool of lipid carrier available.</text>
</comment>
<comment type="similarity">
    <text evidence="1">Belongs to the UppP family.</text>
</comment>
<sequence length="293" mass="32233">MDIALAIKALILGIVEGLTEFLPISSTGHLILAGQLLDFNDEKGKIFEIVIQFGAILAVCWEFRHKIIDVIKGLPNDPRQQRFAINVIVATIPAITLALIFGKAIKAHLFNPIVVASAFILGGFVILWAEWRERHRGETHDPRANALLEAAKAGAPRIETLDDLRISDAIKVGFAQCFALIPGTSRSGSTIIGGLLFGLSRKVATEFSFFLAIPVIFGATVYELYKSRALLSADDLSIFAVGFVAAFISAFFCVRWLLKFIATHDFRGFAWYRIIFGIIVLATAYTHLIAWQA</sequence>
<name>UPPP_RALPJ</name>
<gene>
    <name evidence="1" type="primary">uppP</name>
    <name type="ordered locus">Rpic_0651</name>
</gene>
<accession>B2U7E0</accession>
<protein>
    <recommendedName>
        <fullName evidence="1">Undecaprenyl-diphosphatase</fullName>
        <ecNumber evidence="1">3.6.1.27</ecNumber>
    </recommendedName>
    <alternativeName>
        <fullName evidence="1">Bacitracin resistance protein</fullName>
    </alternativeName>
    <alternativeName>
        <fullName evidence="1">Undecaprenyl pyrophosphate phosphatase</fullName>
    </alternativeName>
</protein>
<reference key="1">
    <citation type="submission" date="2008-05" db="EMBL/GenBank/DDBJ databases">
        <title>Complete sequence of chromosome 1 of Ralstonia pickettii 12J.</title>
        <authorList>
            <person name="Lucas S."/>
            <person name="Copeland A."/>
            <person name="Lapidus A."/>
            <person name="Glavina del Rio T."/>
            <person name="Dalin E."/>
            <person name="Tice H."/>
            <person name="Bruce D."/>
            <person name="Goodwin L."/>
            <person name="Pitluck S."/>
            <person name="Meincke L."/>
            <person name="Brettin T."/>
            <person name="Detter J.C."/>
            <person name="Han C."/>
            <person name="Kuske C.R."/>
            <person name="Schmutz J."/>
            <person name="Larimer F."/>
            <person name="Land M."/>
            <person name="Hauser L."/>
            <person name="Kyrpides N."/>
            <person name="Mikhailova N."/>
            <person name="Marsh T."/>
            <person name="Richardson P."/>
        </authorList>
    </citation>
    <scope>NUCLEOTIDE SEQUENCE [LARGE SCALE GENOMIC DNA]</scope>
    <source>
        <strain>12J</strain>
    </source>
</reference>